<accession>A3MYN0</accession>
<keyword id="KW-0067">ATP-binding</keyword>
<keyword id="KW-0963">Cytoplasm</keyword>
<keyword id="KW-1015">Disulfide bond</keyword>
<keyword id="KW-0547">Nucleotide-binding</keyword>
<keyword id="KW-1185">Reference proteome</keyword>
<keyword id="KW-0694">RNA-binding</keyword>
<keyword id="KW-0808">Transferase</keyword>
<keyword id="KW-0819">tRNA processing</keyword>
<keyword id="KW-0820">tRNA-binding</keyword>
<sequence length="389" mass="43181">MTNQTQLSSKTYDTHFAKLTAEQLAENAKKKVIIGMSGGVDSSVSAFILQQQGYQVEGLFMKNWEEDDDTDYCTAAADLADAQAVADKLGMKLHKINFAAEYWDNVFEHFLNEYKAGRTPNPDILCNKEIKFKAFLEYAAEDLGADYIATGHYVRRSGDDNNAQLLRGLDANKDQSYFLYTLSHKQVGQSLFPVGDIEKPIVRQIAEDLGLATAKKKDSTGICFIGERKFKDFLARYLPAQPGEIRTVGGKVVGRHDGLMYHTLGQRKGLGIGGVKGLSEDPFYVVEKDLINNVLVVAQGHDNSALLSSGLIATQLHWVDRQPIRENLRCTVKTRYRQTDIACEIQPIDDDTIRVIFDDPQIAVTPGQSAVFYQGEVCLGGGVIEEQLK</sequence>
<proteinExistence type="inferred from homology"/>
<feature type="chain" id="PRO_0000349502" description="tRNA-specific 2-thiouridylase MnmA">
    <location>
        <begin position="1"/>
        <end position="389"/>
    </location>
</feature>
<feature type="region of interest" description="Interaction with target base in tRNA" evidence="1">
    <location>
        <begin position="121"/>
        <end position="123"/>
    </location>
</feature>
<feature type="region of interest" description="Interaction with tRNA" evidence="1">
    <location>
        <begin position="173"/>
        <end position="175"/>
    </location>
</feature>
<feature type="region of interest" description="Interaction with tRNA" evidence="1">
    <location>
        <begin position="335"/>
        <end position="336"/>
    </location>
</feature>
<feature type="active site" description="Nucleophile" evidence="1">
    <location>
        <position position="126"/>
    </location>
</feature>
<feature type="active site" description="Cysteine persulfide intermediate" evidence="1">
    <location>
        <position position="223"/>
    </location>
</feature>
<feature type="binding site" evidence="1">
    <location>
        <begin position="35"/>
        <end position="42"/>
    </location>
    <ligand>
        <name>ATP</name>
        <dbReference type="ChEBI" id="CHEBI:30616"/>
    </ligand>
</feature>
<feature type="binding site" evidence="1">
    <location>
        <position position="61"/>
    </location>
    <ligand>
        <name>ATP</name>
        <dbReference type="ChEBI" id="CHEBI:30616"/>
    </ligand>
</feature>
<feature type="binding site" evidence="1">
    <location>
        <position position="151"/>
    </location>
    <ligand>
        <name>ATP</name>
        <dbReference type="ChEBI" id="CHEBI:30616"/>
    </ligand>
</feature>
<feature type="site" description="Interaction with tRNA" evidence="1">
    <location>
        <position position="152"/>
    </location>
</feature>
<feature type="site" description="Interaction with tRNA" evidence="1">
    <location>
        <position position="368"/>
    </location>
</feature>
<feature type="disulfide bond" description="Alternate" evidence="1">
    <location>
        <begin position="126"/>
        <end position="223"/>
    </location>
</feature>
<comment type="function">
    <text evidence="1">Catalyzes the 2-thiolation of uridine at the wobble position (U34) of tRNA, leading to the formation of s(2)U34.</text>
</comment>
<comment type="catalytic activity">
    <reaction evidence="1">
        <text>S-sulfanyl-L-cysteinyl-[protein] + uridine(34) in tRNA + AH2 + ATP = 2-thiouridine(34) in tRNA + L-cysteinyl-[protein] + A + AMP + diphosphate + H(+)</text>
        <dbReference type="Rhea" id="RHEA:47032"/>
        <dbReference type="Rhea" id="RHEA-COMP:10131"/>
        <dbReference type="Rhea" id="RHEA-COMP:11726"/>
        <dbReference type="Rhea" id="RHEA-COMP:11727"/>
        <dbReference type="Rhea" id="RHEA-COMP:11728"/>
        <dbReference type="ChEBI" id="CHEBI:13193"/>
        <dbReference type="ChEBI" id="CHEBI:15378"/>
        <dbReference type="ChEBI" id="CHEBI:17499"/>
        <dbReference type="ChEBI" id="CHEBI:29950"/>
        <dbReference type="ChEBI" id="CHEBI:30616"/>
        <dbReference type="ChEBI" id="CHEBI:33019"/>
        <dbReference type="ChEBI" id="CHEBI:61963"/>
        <dbReference type="ChEBI" id="CHEBI:65315"/>
        <dbReference type="ChEBI" id="CHEBI:87170"/>
        <dbReference type="ChEBI" id="CHEBI:456215"/>
        <dbReference type="EC" id="2.8.1.13"/>
    </reaction>
</comment>
<comment type="subcellular location">
    <subcellularLocation>
        <location evidence="1">Cytoplasm</location>
    </subcellularLocation>
</comment>
<comment type="similarity">
    <text evidence="1">Belongs to the MnmA/TRMU family.</text>
</comment>
<dbReference type="EC" id="2.8.1.13" evidence="1"/>
<dbReference type="EMBL" id="CP000569">
    <property type="protein sequence ID" value="ABN73266.1"/>
    <property type="molecule type" value="Genomic_DNA"/>
</dbReference>
<dbReference type="RefSeq" id="WP_011848323.1">
    <property type="nucleotide sequence ID" value="NC_009053.1"/>
</dbReference>
<dbReference type="SMR" id="A3MYN0"/>
<dbReference type="STRING" id="416269.APL_0158"/>
<dbReference type="EnsemblBacteria" id="ABN73266">
    <property type="protein sequence ID" value="ABN73266"/>
    <property type="gene ID" value="APL_0158"/>
</dbReference>
<dbReference type="KEGG" id="apl:APL_0158"/>
<dbReference type="PATRIC" id="fig|416269.6.peg.162"/>
<dbReference type="eggNOG" id="COG0482">
    <property type="taxonomic scope" value="Bacteria"/>
</dbReference>
<dbReference type="HOGENOM" id="CLU_035188_1_0_6"/>
<dbReference type="Proteomes" id="UP000001432">
    <property type="component" value="Chromosome"/>
</dbReference>
<dbReference type="GO" id="GO:0005737">
    <property type="term" value="C:cytoplasm"/>
    <property type="evidence" value="ECO:0007669"/>
    <property type="project" value="UniProtKB-SubCell"/>
</dbReference>
<dbReference type="GO" id="GO:0005524">
    <property type="term" value="F:ATP binding"/>
    <property type="evidence" value="ECO:0007669"/>
    <property type="project" value="UniProtKB-KW"/>
</dbReference>
<dbReference type="GO" id="GO:0000049">
    <property type="term" value="F:tRNA binding"/>
    <property type="evidence" value="ECO:0007669"/>
    <property type="project" value="UniProtKB-KW"/>
</dbReference>
<dbReference type="GO" id="GO:0103016">
    <property type="term" value="F:tRNA-uridine 2-sulfurtransferase activity"/>
    <property type="evidence" value="ECO:0007669"/>
    <property type="project" value="UniProtKB-EC"/>
</dbReference>
<dbReference type="GO" id="GO:0002143">
    <property type="term" value="P:tRNA wobble position uridine thiolation"/>
    <property type="evidence" value="ECO:0007669"/>
    <property type="project" value="TreeGrafter"/>
</dbReference>
<dbReference type="CDD" id="cd01998">
    <property type="entry name" value="MnmA_TRMU-like"/>
    <property type="match status" value="1"/>
</dbReference>
<dbReference type="FunFam" id="2.30.30.280:FF:000001">
    <property type="entry name" value="tRNA-specific 2-thiouridylase MnmA"/>
    <property type="match status" value="1"/>
</dbReference>
<dbReference type="FunFam" id="2.40.30.10:FF:000023">
    <property type="entry name" value="tRNA-specific 2-thiouridylase MnmA"/>
    <property type="match status" value="1"/>
</dbReference>
<dbReference type="FunFam" id="3.40.50.620:FF:000004">
    <property type="entry name" value="tRNA-specific 2-thiouridylase MnmA"/>
    <property type="match status" value="1"/>
</dbReference>
<dbReference type="Gene3D" id="2.30.30.280">
    <property type="entry name" value="Adenine nucleotide alpha hydrolases-like domains"/>
    <property type="match status" value="1"/>
</dbReference>
<dbReference type="Gene3D" id="3.40.50.620">
    <property type="entry name" value="HUPs"/>
    <property type="match status" value="1"/>
</dbReference>
<dbReference type="Gene3D" id="2.40.30.10">
    <property type="entry name" value="Translation factors"/>
    <property type="match status" value="1"/>
</dbReference>
<dbReference type="HAMAP" id="MF_00144">
    <property type="entry name" value="tRNA_thiouridyl_MnmA"/>
    <property type="match status" value="1"/>
</dbReference>
<dbReference type="InterPro" id="IPR004506">
    <property type="entry name" value="MnmA-like"/>
</dbReference>
<dbReference type="InterPro" id="IPR046885">
    <property type="entry name" value="MnmA-like_C"/>
</dbReference>
<dbReference type="InterPro" id="IPR046884">
    <property type="entry name" value="MnmA-like_central"/>
</dbReference>
<dbReference type="InterPro" id="IPR023382">
    <property type="entry name" value="MnmA-like_central_sf"/>
</dbReference>
<dbReference type="InterPro" id="IPR014729">
    <property type="entry name" value="Rossmann-like_a/b/a_fold"/>
</dbReference>
<dbReference type="NCBIfam" id="NF001138">
    <property type="entry name" value="PRK00143.1"/>
    <property type="match status" value="1"/>
</dbReference>
<dbReference type="NCBIfam" id="TIGR00420">
    <property type="entry name" value="trmU"/>
    <property type="match status" value="1"/>
</dbReference>
<dbReference type="PANTHER" id="PTHR11933:SF5">
    <property type="entry name" value="MITOCHONDRIAL TRNA-SPECIFIC 2-THIOURIDYLASE 1"/>
    <property type="match status" value="1"/>
</dbReference>
<dbReference type="PANTHER" id="PTHR11933">
    <property type="entry name" value="TRNA 5-METHYLAMINOMETHYL-2-THIOURIDYLATE -METHYLTRANSFERASE"/>
    <property type="match status" value="1"/>
</dbReference>
<dbReference type="Pfam" id="PF03054">
    <property type="entry name" value="tRNA_Me_trans"/>
    <property type="match status" value="1"/>
</dbReference>
<dbReference type="Pfam" id="PF20258">
    <property type="entry name" value="tRNA_Me_trans_C"/>
    <property type="match status" value="1"/>
</dbReference>
<dbReference type="Pfam" id="PF20259">
    <property type="entry name" value="tRNA_Me_trans_M"/>
    <property type="match status" value="1"/>
</dbReference>
<dbReference type="SUPFAM" id="SSF52402">
    <property type="entry name" value="Adenine nucleotide alpha hydrolases-like"/>
    <property type="match status" value="1"/>
</dbReference>
<organism>
    <name type="scientific">Actinobacillus pleuropneumoniae serotype 5b (strain L20)</name>
    <dbReference type="NCBI Taxonomy" id="416269"/>
    <lineage>
        <taxon>Bacteria</taxon>
        <taxon>Pseudomonadati</taxon>
        <taxon>Pseudomonadota</taxon>
        <taxon>Gammaproteobacteria</taxon>
        <taxon>Pasteurellales</taxon>
        <taxon>Pasteurellaceae</taxon>
        <taxon>Actinobacillus</taxon>
    </lineage>
</organism>
<name>MNMA_ACTP2</name>
<protein>
    <recommendedName>
        <fullName evidence="1">tRNA-specific 2-thiouridylase MnmA</fullName>
        <ecNumber evidence="1">2.8.1.13</ecNumber>
    </recommendedName>
</protein>
<evidence type="ECO:0000255" key="1">
    <source>
        <dbReference type="HAMAP-Rule" id="MF_00144"/>
    </source>
</evidence>
<gene>
    <name evidence="1" type="primary">mnmA</name>
    <name type="ordered locus">APL_0158</name>
</gene>
<reference key="1">
    <citation type="journal article" date="2008" name="J. Bacteriol.">
        <title>The complete genome sequence of Actinobacillus pleuropneumoniae L20 (serotype 5b).</title>
        <authorList>
            <person name="Foote S.J."/>
            <person name="Bosse J.T."/>
            <person name="Bouevitch A.B."/>
            <person name="Langford P.R."/>
            <person name="Young N.M."/>
            <person name="Nash J.H.E."/>
        </authorList>
    </citation>
    <scope>NUCLEOTIDE SEQUENCE [LARGE SCALE GENOMIC DNA]</scope>
    <source>
        <strain>L20</strain>
    </source>
</reference>